<sequence>MKGTIIKGIGGFYYIKIDNSEEIIECKARGKFRHTELTPMIGDYVEISVDKNNKGAIEKIYERRSELFRPAVANVTQALVVFSFKNPDINIDLLNKFLLLCEYNNLKAIVCFNKMDLVNKEDYKDIISMIEQAGYDIIFLNAKEERNMDIIKKLIKDNVTVFCGPSGVGKSTMLNKIIGKETMITGNISEKLKRGKHTTRHSELIYVDEGLLVDTPGFSSLDINFMEKEDLLHCIPEFRDFIGECKFTGCLHHREPNCAVKKAVEEGHIHKNRYDFYIKTLEEFMNRRKKKW</sequence>
<keyword id="KW-0963">Cytoplasm</keyword>
<keyword id="KW-0342">GTP-binding</keyword>
<keyword id="KW-0378">Hydrolase</keyword>
<keyword id="KW-0479">Metal-binding</keyword>
<keyword id="KW-0547">Nucleotide-binding</keyword>
<keyword id="KW-0690">Ribosome biogenesis</keyword>
<keyword id="KW-0694">RNA-binding</keyword>
<keyword id="KW-0699">rRNA-binding</keyword>
<keyword id="KW-0862">Zinc</keyword>
<dbReference type="EC" id="3.6.1.-" evidence="1"/>
<dbReference type="EMBL" id="CP000962">
    <property type="protein sequence ID" value="ACA54082.1"/>
    <property type="molecule type" value="Genomic_DNA"/>
</dbReference>
<dbReference type="RefSeq" id="WP_012342230.1">
    <property type="nucleotide sequence ID" value="NC_010520.1"/>
</dbReference>
<dbReference type="SMR" id="B1KX53"/>
<dbReference type="KEGG" id="cbl:CLK_1885"/>
<dbReference type="HOGENOM" id="CLU_033617_2_1_9"/>
<dbReference type="GO" id="GO:0005737">
    <property type="term" value="C:cytoplasm"/>
    <property type="evidence" value="ECO:0007669"/>
    <property type="project" value="UniProtKB-SubCell"/>
</dbReference>
<dbReference type="GO" id="GO:0005525">
    <property type="term" value="F:GTP binding"/>
    <property type="evidence" value="ECO:0007669"/>
    <property type="project" value="UniProtKB-UniRule"/>
</dbReference>
<dbReference type="GO" id="GO:0003924">
    <property type="term" value="F:GTPase activity"/>
    <property type="evidence" value="ECO:0007669"/>
    <property type="project" value="UniProtKB-UniRule"/>
</dbReference>
<dbReference type="GO" id="GO:0046872">
    <property type="term" value="F:metal ion binding"/>
    <property type="evidence" value="ECO:0007669"/>
    <property type="project" value="UniProtKB-KW"/>
</dbReference>
<dbReference type="GO" id="GO:0019843">
    <property type="term" value="F:rRNA binding"/>
    <property type="evidence" value="ECO:0007669"/>
    <property type="project" value="UniProtKB-KW"/>
</dbReference>
<dbReference type="GO" id="GO:0042274">
    <property type="term" value="P:ribosomal small subunit biogenesis"/>
    <property type="evidence" value="ECO:0007669"/>
    <property type="project" value="UniProtKB-UniRule"/>
</dbReference>
<dbReference type="CDD" id="cd04466">
    <property type="entry name" value="S1_YloQ_GTPase"/>
    <property type="match status" value="1"/>
</dbReference>
<dbReference type="CDD" id="cd01854">
    <property type="entry name" value="YjeQ_EngC"/>
    <property type="match status" value="1"/>
</dbReference>
<dbReference type="Gene3D" id="2.40.50.140">
    <property type="entry name" value="Nucleic acid-binding proteins"/>
    <property type="match status" value="1"/>
</dbReference>
<dbReference type="Gene3D" id="3.40.50.300">
    <property type="entry name" value="P-loop containing nucleotide triphosphate hydrolases"/>
    <property type="match status" value="1"/>
</dbReference>
<dbReference type="Gene3D" id="1.10.40.50">
    <property type="entry name" value="Probable gtpase engc, domain 3"/>
    <property type="match status" value="1"/>
</dbReference>
<dbReference type="HAMAP" id="MF_01820">
    <property type="entry name" value="GTPase_RsgA"/>
    <property type="match status" value="1"/>
</dbReference>
<dbReference type="InterPro" id="IPR030378">
    <property type="entry name" value="G_CP_dom"/>
</dbReference>
<dbReference type="InterPro" id="IPR012340">
    <property type="entry name" value="NA-bd_OB-fold"/>
</dbReference>
<dbReference type="InterPro" id="IPR027417">
    <property type="entry name" value="P-loop_NTPase"/>
</dbReference>
<dbReference type="InterPro" id="IPR004881">
    <property type="entry name" value="Ribosome_biogen_GTPase_RsgA"/>
</dbReference>
<dbReference type="InterPro" id="IPR010914">
    <property type="entry name" value="RsgA_GTPase_dom"/>
</dbReference>
<dbReference type="InterPro" id="IPR031944">
    <property type="entry name" value="RsgA_N"/>
</dbReference>
<dbReference type="NCBIfam" id="TIGR00157">
    <property type="entry name" value="ribosome small subunit-dependent GTPase A"/>
    <property type="match status" value="1"/>
</dbReference>
<dbReference type="PANTHER" id="PTHR32120">
    <property type="entry name" value="SMALL RIBOSOMAL SUBUNIT BIOGENESIS GTPASE RSGA"/>
    <property type="match status" value="1"/>
</dbReference>
<dbReference type="PANTHER" id="PTHR32120:SF11">
    <property type="entry name" value="SMALL RIBOSOMAL SUBUNIT BIOGENESIS GTPASE RSGA 1, MITOCHONDRIAL-RELATED"/>
    <property type="match status" value="1"/>
</dbReference>
<dbReference type="Pfam" id="PF03193">
    <property type="entry name" value="RsgA_GTPase"/>
    <property type="match status" value="1"/>
</dbReference>
<dbReference type="Pfam" id="PF16745">
    <property type="entry name" value="RsgA_N"/>
    <property type="match status" value="1"/>
</dbReference>
<dbReference type="SUPFAM" id="SSF50249">
    <property type="entry name" value="Nucleic acid-binding proteins"/>
    <property type="match status" value="1"/>
</dbReference>
<dbReference type="SUPFAM" id="SSF52540">
    <property type="entry name" value="P-loop containing nucleoside triphosphate hydrolases"/>
    <property type="match status" value="1"/>
</dbReference>
<dbReference type="PROSITE" id="PS50936">
    <property type="entry name" value="ENGC_GTPASE"/>
    <property type="match status" value="1"/>
</dbReference>
<dbReference type="PROSITE" id="PS51721">
    <property type="entry name" value="G_CP"/>
    <property type="match status" value="1"/>
</dbReference>
<protein>
    <recommendedName>
        <fullName evidence="1">Small ribosomal subunit biogenesis GTPase RsgA</fullName>
        <ecNumber evidence="1">3.6.1.-</ecNumber>
    </recommendedName>
</protein>
<accession>B1KX53</accession>
<feature type="chain" id="PRO_1000188052" description="Small ribosomal subunit biogenesis GTPase RsgA">
    <location>
        <begin position="1"/>
        <end position="292"/>
    </location>
</feature>
<feature type="domain" description="CP-type G" evidence="2">
    <location>
        <begin position="64"/>
        <end position="221"/>
    </location>
</feature>
<feature type="binding site" evidence="1">
    <location>
        <begin position="113"/>
        <end position="116"/>
    </location>
    <ligand>
        <name>GTP</name>
        <dbReference type="ChEBI" id="CHEBI:37565"/>
    </ligand>
</feature>
<feature type="binding site" evidence="1">
    <location>
        <begin position="164"/>
        <end position="172"/>
    </location>
    <ligand>
        <name>GTP</name>
        <dbReference type="ChEBI" id="CHEBI:37565"/>
    </ligand>
</feature>
<feature type="binding site" evidence="1">
    <location>
        <position position="245"/>
    </location>
    <ligand>
        <name>Zn(2+)</name>
        <dbReference type="ChEBI" id="CHEBI:29105"/>
    </ligand>
</feature>
<feature type="binding site" evidence="1">
    <location>
        <position position="250"/>
    </location>
    <ligand>
        <name>Zn(2+)</name>
        <dbReference type="ChEBI" id="CHEBI:29105"/>
    </ligand>
</feature>
<feature type="binding site" evidence="1">
    <location>
        <position position="252"/>
    </location>
    <ligand>
        <name>Zn(2+)</name>
        <dbReference type="ChEBI" id="CHEBI:29105"/>
    </ligand>
</feature>
<feature type="binding site" evidence="1">
    <location>
        <position position="258"/>
    </location>
    <ligand>
        <name>Zn(2+)</name>
        <dbReference type="ChEBI" id="CHEBI:29105"/>
    </ligand>
</feature>
<organism>
    <name type="scientific">Clostridium botulinum (strain Loch Maree / Type A3)</name>
    <dbReference type="NCBI Taxonomy" id="498214"/>
    <lineage>
        <taxon>Bacteria</taxon>
        <taxon>Bacillati</taxon>
        <taxon>Bacillota</taxon>
        <taxon>Clostridia</taxon>
        <taxon>Eubacteriales</taxon>
        <taxon>Clostridiaceae</taxon>
        <taxon>Clostridium</taxon>
    </lineage>
</organism>
<gene>
    <name evidence="1" type="primary">rsgA</name>
    <name type="ordered locus">CLK_1885</name>
</gene>
<evidence type="ECO:0000255" key="1">
    <source>
        <dbReference type="HAMAP-Rule" id="MF_01820"/>
    </source>
</evidence>
<evidence type="ECO:0000255" key="2">
    <source>
        <dbReference type="PROSITE-ProRule" id="PRU01058"/>
    </source>
</evidence>
<name>RSGA_CLOBM</name>
<reference key="1">
    <citation type="journal article" date="2007" name="PLoS ONE">
        <title>Analysis of the neurotoxin complex genes in Clostridium botulinum A1-A4 and B1 strains: BoNT/A3, /Ba4 and /B1 clusters are located within plasmids.</title>
        <authorList>
            <person name="Smith T.J."/>
            <person name="Hill K.K."/>
            <person name="Foley B.T."/>
            <person name="Detter J.C."/>
            <person name="Munk A.C."/>
            <person name="Bruce D.C."/>
            <person name="Doggett N.A."/>
            <person name="Smith L.A."/>
            <person name="Marks J.D."/>
            <person name="Xie G."/>
            <person name="Brettin T.S."/>
        </authorList>
    </citation>
    <scope>NUCLEOTIDE SEQUENCE [LARGE SCALE GENOMIC DNA]</scope>
    <source>
        <strain>Loch Maree / Type A3</strain>
    </source>
</reference>
<proteinExistence type="inferred from homology"/>
<comment type="function">
    <text evidence="1">One of several proteins that assist in the late maturation steps of the functional core of the 30S ribosomal subunit. Helps release RbfA from mature subunits. May play a role in the assembly of ribosomal proteins into the subunit. Circularly permuted GTPase that catalyzes slow GTP hydrolysis, GTPase activity is stimulated by the 30S ribosomal subunit.</text>
</comment>
<comment type="cofactor">
    <cofactor evidence="1">
        <name>Zn(2+)</name>
        <dbReference type="ChEBI" id="CHEBI:29105"/>
    </cofactor>
    <text evidence="1">Binds 1 zinc ion per subunit.</text>
</comment>
<comment type="subunit">
    <text evidence="1">Monomer. Associates with 30S ribosomal subunit, binds 16S rRNA.</text>
</comment>
<comment type="subcellular location">
    <subcellularLocation>
        <location evidence="1">Cytoplasm</location>
    </subcellularLocation>
</comment>
<comment type="similarity">
    <text evidence="1">Belongs to the TRAFAC class YlqF/YawG GTPase family. RsgA subfamily.</text>
</comment>